<gene>
    <name evidence="1" type="primary">rnfD</name>
    <name type="ordered locus">Sfri_2175</name>
</gene>
<reference key="1">
    <citation type="submission" date="2006-08" db="EMBL/GenBank/DDBJ databases">
        <title>Complete sequence of Shewanella frigidimarina NCIMB 400.</title>
        <authorList>
            <consortium name="US DOE Joint Genome Institute"/>
            <person name="Copeland A."/>
            <person name="Lucas S."/>
            <person name="Lapidus A."/>
            <person name="Barry K."/>
            <person name="Detter J.C."/>
            <person name="Glavina del Rio T."/>
            <person name="Hammon N."/>
            <person name="Israni S."/>
            <person name="Dalin E."/>
            <person name="Tice H."/>
            <person name="Pitluck S."/>
            <person name="Fredrickson J.K."/>
            <person name="Kolker E."/>
            <person name="McCuel L.A."/>
            <person name="DiChristina T."/>
            <person name="Nealson K.H."/>
            <person name="Newman D."/>
            <person name="Tiedje J.M."/>
            <person name="Zhou J."/>
            <person name="Romine M.F."/>
            <person name="Culley D.E."/>
            <person name="Serres M."/>
            <person name="Chertkov O."/>
            <person name="Brettin T."/>
            <person name="Bruce D."/>
            <person name="Han C."/>
            <person name="Tapia R."/>
            <person name="Gilna P."/>
            <person name="Schmutz J."/>
            <person name="Larimer F."/>
            <person name="Land M."/>
            <person name="Hauser L."/>
            <person name="Kyrpides N."/>
            <person name="Mikhailova N."/>
            <person name="Richardson P."/>
        </authorList>
    </citation>
    <scope>NUCLEOTIDE SEQUENCE [LARGE SCALE GENOMIC DNA]</scope>
    <source>
        <strain>NCIMB 400</strain>
    </source>
</reference>
<dbReference type="EC" id="7.-.-.-" evidence="1"/>
<dbReference type="EMBL" id="CP000447">
    <property type="protein sequence ID" value="ABI72021.1"/>
    <property type="molecule type" value="Genomic_DNA"/>
</dbReference>
<dbReference type="RefSeq" id="WP_011637631.1">
    <property type="nucleotide sequence ID" value="NC_008345.1"/>
</dbReference>
<dbReference type="SMR" id="Q081P4"/>
<dbReference type="STRING" id="318167.Sfri_2175"/>
<dbReference type="KEGG" id="sfr:Sfri_2175"/>
<dbReference type="eggNOG" id="COG4658">
    <property type="taxonomic scope" value="Bacteria"/>
</dbReference>
<dbReference type="HOGENOM" id="CLU_042020_0_0_6"/>
<dbReference type="OrthoDB" id="9776359at2"/>
<dbReference type="Proteomes" id="UP000000684">
    <property type="component" value="Chromosome"/>
</dbReference>
<dbReference type="GO" id="GO:0005886">
    <property type="term" value="C:plasma membrane"/>
    <property type="evidence" value="ECO:0007669"/>
    <property type="project" value="UniProtKB-SubCell"/>
</dbReference>
<dbReference type="GO" id="GO:0022900">
    <property type="term" value="P:electron transport chain"/>
    <property type="evidence" value="ECO:0007669"/>
    <property type="project" value="UniProtKB-UniRule"/>
</dbReference>
<dbReference type="GO" id="GO:0055085">
    <property type="term" value="P:transmembrane transport"/>
    <property type="evidence" value="ECO:0007669"/>
    <property type="project" value="InterPro"/>
</dbReference>
<dbReference type="HAMAP" id="MF_00462">
    <property type="entry name" value="RsxD_RnfD"/>
    <property type="match status" value="1"/>
</dbReference>
<dbReference type="InterPro" id="IPR004338">
    <property type="entry name" value="NqrB/RnfD"/>
</dbReference>
<dbReference type="InterPro" id="IPR011303">
    <property type="entry name" value="RnfD_bac"/>
</dbReference>
<dbReference type="NCBIfam" id="NF002011">
    <property type="entry name" value="PRK00816.1"/>
    <property type="match status" value="1"/>
</dbReference>
<dbReference type="NCBIfam" id="TIGR01946">
    <property type="entry name" value="rnfD"/>
    <property type="match status" value="1"/>
</dbReference>
<dbReference type="PANTHER" id="PTHR30578">
    <property type="entry name" value="ELECTRON TRANSPORT COMPLEX PROTEIN RNFD"/>
    <property type="match status" value="1"/>
</dbReference>
<dbReference type="PANTHER" id="PTHR30578:SF0">
    <property type="entry name" value="ION-TRANSLOCATING OXIDOREDUCTASE COMPLEX SUBUNIT D"/>
    <property type="match status" value="1"/>
</dbReference>
<dbReference type="Pfam" id="PF03116">
    <property type="entry name" value="NQR2_RnfD_RnfE"/>
    <property type="match status" value="1"/>
</dbReference>
<accession>Q081P4</accession>
<comment type="function">
    <text evidence="1">Part of a membrane-bound complex that couples electron transfer with translocation of ions across the membrane.</text>
</comment>
<comment type="cofactor">
    <cofactor evidence="1">
        <name>FMN</name>
        <dbReference type="ChEBI" id="CHEBI:58210"/>
    </cofactor>
</comment>
<comment type="subunit">
    <text evidence="1">The complex is composed of six subunits: RnfA, RnfB, RnfC, RnfD, RnfE and RnfG.</text>
</comment>
<comment type="subcellular location">
    <subcellularLocation>
        <location evidence="1">Cell inner membrane</location>
        <topology evidence="1">Multi-pass membrane protein</topology>
    </subcellularLocation>
</comment>
<comment type="similarity">
    <text evidence="1">Belongs to the NqrB/RnfD family.</text>
</comment>
<proteinExistence type="inferred from homology"/>
<feature type="chain" id="PRO_0000298237" description="Ion-translocating oxidoreductase complex subunit D">
    <location>
        <begin position="1"/>
        <end position="350"/>
    </location>
</feature>
<feature type="transmembrane region" description="Helical" evidence="1">
    <location>
        <begin position="37"/>
        <end position="57"/>
    </location>
</feature>
<feature type="transmembrane region" description="Helical" evidence="1">
    <location>
        <begin position="78"/>
        <end position="109"/>
    </location>
</feature>
<feature type="transmembrane region" description="Helical" evidence="1">
    <location>
        <begin position="124"/>
        <end position="144"/>
    </location>
</feature>
<feature type="transmembrane region" description="Helical" evidence="1">
    <location>
        <begin position="158"/>
        <end position="178"/>
    </location>
</feature>
<feature type="transmembrane region" description="Helical" evidence="1">
    <location>
        <begin position="212"/>
        <end position="232"/>
    </location>
</feature>
<feature type="transmembrane region" description="Helical" evidence="1">
    <location>
        <begin position="239"/>
        <end position="259"/>
    </location>
</feature>
<feature type="transmembrane region" description="Helical" evidence="1">
    <location>
        <begin position="264"/>
        <end position="284"/>
    </location>
</feature>
<feature type="transmembrane region" description="Helical" evidence="1">
    <location>
        <begin position="298"/>
        <end position="318"/>
    </location>
</feature>
<feature type="transmembrane region" description="Helical" evidence="1">
    <location>
        <begin position="319"/>
        <end position="339"/>
    </location>
</feature>
<feature type="modified residue" description="FMN phosphoryl threonine" evidence="1">
    <location>
        <position position="185"/>
    </location>
</feature>
<keyword id="KW-0997">Cell inner membrane</keyword>
<keyword id="KW-1003">Cell membrane</keyword>
<keyword id="KW-0249">Electron transport</keyword>
<keyword id="KW-0285">Flavoprotein</keyword>
<keyword id="KW-0288">FMN</keyword>
<keyword id="KW-0472">Membrane</keyword>
<keyword id="KW-0597">Phosphoprotein</keyword>
<keyword id="KW-1185">Reference proteome</keyword>
<keyword id="KW-1278">Translocase</keyword>
<keyword id="KW-0812">Transmembrane</keyword>
<keyword id="KW-1133">Transmembrane helix</keyword>
<keyword id="KW-0813">Transport</keyword>
<evidence type="ECO:0000255" key="1">
    <source>
        <dbReference type="HAMAP-Rule" id="MF_00462"/>
    </source>
</evidence>
<name>RNFD_SHEFN</name>
<protein>
    <recommendedName>
        <fullName evidence="1">Ion-translocating oxidoreductase complex subunit D</fullName>
        <ecNumber evidence="1">7.-.-.-</ecNumber>
    </recommendedName>
    <alternativeName>
        <fullName evidence="1">Rnf electron transport complex subunit D</fullName>
    </alternativeName>
</protein>
<organism>
    <name type="scientific">Shewanella frigidimarina (strain NCIMB 400)</name>
    <dbReference type="NCBI Taxonomy" id="318167"/>
    <lineage>
        <taxon>Bacteria</taxon>
        <taxon>Pseudomonadati</taxon>
        <taxon>Pseudomonadota</taxon>
        <taxon>Gammaproteobacteria</taxon>
        <taxon>Alteromonadales</taxon>
        <taxon>Shewanellaceae</taxon>
        <taxon>Shewanella</taxon>
    </lineage>
</organism>
<sequence length="350" mass="37878">MAFKIASSPHVSTTLHTNTVMKRVALCLIPGIAVQSYYFGYGTLVQLLLAITVAYLAEAAVMKLRNRNITATLTDNSALVTASLLAVAIPPLAPWWLIVIGTLFAIVIVKQLYGGLGNNVFNPAMAAYVLLLISFPVQMTSWVAPQTLTVNYADMLHTFNSIFQLNAGYAADFFHLAIDGTTMATPLDTLKTDLSMGLTTTESMTKTIFSGSVGEGWFWVNMAYLVGGLVMLKLKVIRWHISGAIVLTLFVCASIGFLISPDTFVSPIMHLFSGGTMLAAFFIATDPVTAATSPRGRLIFGAMIGLLIYLIRTFGGYPDAVAFAVLLANMCAPFIDYYVRPRSYGHRVGN</sequence>